<name>PYRI_VIBVY</name>
<dbReference type="EMBL" id="BA000037">
    <property type="protein sequence ID" value="BAC95685.1"/>
    <property type="molecule type" value="Genomic_DNA"/>
</dbReference>
<dbReference type="RefSeq" id="WP_011151230.1">
    <property type="nucleotide sequence ID" value="NC_005139.1"/>
</dbReference>
<dbReference type="SMR" id="Q7MHF0"/>
<dbReference type="STRING" id="672.VV93_v1c26440"/>
<dbReference type="KEGG" id="vvy:VV2921"/>
<dbReference type="PATRIC" id="fig|196600.6.peg.2902"/>
<dbReference type="eggNOG" id="COG1781">
    <property type="taxonomic scope" value="Bacteria"/>
</dbReference>
<dbReference type="HOGENOM" id="CLU_128576_0_0_6"/>
<dbReference type="Proteomes" id="UP000002675">
    <property type="component" value="Chromosome I"/>
</dbReference>
<dbReference type="GO" id="GO:0009347">
    <property type="term" value="C:aspartate carbamoyltransferase complex"/>
    <property type="evidence" value="ECO:0007669"/>
    <property type="project" value="InterPro"/>
</dbReference>
<dbReference type="GO" id="GO:0046872">
    <property type="term" value="F:metal ion binding"/>
    <property type="evidence" value="ECO:0007669"/>
    <property type="project" value="UniProtKB-KW"/>
</dbReference>
<dbReference type="GO" id="GO:0006207">
    <property type="term" value="P:'de novo' pyrimidine nucleobase biosynthetic process"/>
    <property type="evidence" value="ECO:0007669"/>
    <property type="project" value="InterPro"/>
</dbReference>
<dbReference type="GO" id="GO:0006221">
    <property type="term" value="P:pyrimidine nucleotide biosynthetic process"/>
    <property type="evidence" value="ECO:0007669"/>
    <property type="project" value="UniProtKB-UniRule"/>
</dbReference>
<dbReference type="Gene3D" id="2.30.30.20">
    <property type="entry name" value="Aspartate carbamoyltransferase regulatory subunit, C-terminal domain"/>
    <property type="match status" value="1"/>
</dbReference>
<dbReference type="Gene3D" id="3.30.70.140">
    <property type="entry name" value="Aspartate carbamoyltransferase regulatory subunit, N-terminal domain"/>
    <property type="match status" value="1"/>
</dbReference>
<dbReference type="HAMAP" id="MF_00002">
    <property type="entry name" value="Asp_carb_tr_reg"/>
    <property type="match status" value="1"/>
</dbReference>
<dbReference type="InterPro" id="IPR020545">
    <property type="entry name" value="Asp_carbamoyltransf_reg_N"/>
</dbReference>
<dbReference type="InterPro" id="IPR002801">
    <property type="entry name" value="Asp_carbamoylTrfase_reg"/>
</dbReference>
<dbReference type="InterPro" id="IPR020542">
    <property type="entry name" value="Asp_carbamoyltrfase_reg_C"/>
</dbReference>
<dbReference type="InterPro" id="IPR036792">
    <property type="entry name" value="Asp_carbatrfase_reg_C_sf"/>
</dbReference>
<dbReference type="InterPro" id="IPR036793">
    <property type="entry name" value="Asp_carbatrfase_reg_N_sf"/>
</dbReference>
<dbReference type="NCBIfam" id="TIGR00240">
    <property type="entry name" value="ATCase_reg"/>
    <property type="match status" value="1"/>
</dbReference>
<dbReference type="PANTHER" id="PTHR35805">
    <property type="entry name" value="ASPARTATE CARBAMOYLTRANSFERASE REGULATORY CHAIN"/>
    <property type="match status" value="1"/>
</dbReference>
<dbReference type="PANTHER" id="PTHR35805:SF1">
    <property type="entry name" value="ASPARTATE CARBAMOYLTRANSFERASE REGULATORY CHAIN"/>
    <property type="match status" value="1"/>
</dbReference>
<dbReference type="Pfam" id="PF01948">
    <property type="entry name" value="PyrI"/>
    <property type="match status" value="1"/>
</dbReference>
<dbReference type="Pfam" id="PF02748">
    <property type="entry name" value="PyrI_C"/>
    <property type="match status" value="1"/>
</dbReference>
<dbReference type="SUPFAM" id="SSF57825">
    <property type="entry name" value="Aspartate carbamoyltransferase, Regulatory-chain, C-terminal domain"/>
    <property type="match status" value="1"/>
</dbReference>
<dbReference type="SUPFAM" id="SSF54893">
    <property type="entry name" value="Aspartate carbamoyltransferase, Regulatory-chain, N-terminal domain"/>
    <property type="match status" value="1"/>
</dbReference>
<organism>
    <name type="scientific">Vibrio vulnificus (strain YJ016)</name>
    <dbReference type="NCBI Taxonomy" id="196600"/>
    <lineage>
        <taxon>Bacteria</taxon>
        <taxon>Pseudomonadati</taxon>
        <taxon>Pseudomonadota</taxon>
        <taxon>Gammaproteobacteria</taxon>
        <taxon>Vibrionales</taxon>
        <taxon>Vibrionaceae</taxon>
        <taxon>Vibrio</taxon>
    </lineage>
</organism>
<protein>
    <recommendedName>
        <fullName evidence="1">Aspartate carbamoyltransferase regulatory chain</fullName>
    </recommendedName>
</protein>
<sequence>MNKETKLQVEAIKNGTVIDHIPAQVGIKVLKLFDMHNSSQRVTIGLNLPSSALGNKDLLKIENVFINEEQASKLALYAPHATVNQIEDYQVVKKLALELPEFVSDVFECPNSNCITHNEPVASNFRVFEKKGDVRLKCKYCEKVFSREIVTER</sequence>
<evidence type="ECO:0000255" key="1">
    <source>
        <dbReference type="HAMAP-Rule" id="MF_00002"/>
    </source>
</evidence>
<accession>Q7MHF0</accession>
<feature type="chain" id="PRO_0000142322" description="Aspartate carbamoyltransferase regulatory chain">
    <location>
        <begin position="1"/>
        <end position="153"/>
    </location>
</feature>
<feature type="binding site" evidence="1">
    <location>
        <position position="109"/>
    </location>
    <ligand>
        <name>Zn(2+)</name>
        <dbReference type="ChEBI" id="CHEBI:29105"/>
    </ligand>
</feature>
<feature type="binding site" evidence="1">
    <location>
        <position position="114"/>
    </location>
    <ligand>
        <name>Zn(2+)</name>
        <dbReference type="ChEBI" id="CHEBI:29105"/>
    </ligand>
</feature>
<feature type="binding site" evidence="1">
    <location>
        <position position="138"/>
    </location>
    <ligand>
        <name>Zn(2+)</name>
        <dbReference type="ChEBI" id="CHEBI:29105"/>
    </ligand>
</feature>
<feature type="binding site" evidence="1">
    <location>
        <position position="141"/>
    </location>
    <ligand>
        <name>Zn(2+)</name>
        <dbReference type="ChEBI" id="CHEBI:29105"/>
    </ligand>
</feature>
<proteinExistence type="inferred from homology"/>
<reference key="1">
    <citation type="journal article" date="2003" name="Genome Res.">
        <title>Comparative genome analysis of Vibrio vulnificus, a marine pathogen.</title>
        <authorList>
            <person name="Chen C.-Y."/>
            <person name="Wu K.-M."/>
            <person name="Chang Y.-C."/>
            <person name="Chang C.-H."/>
            <person name="Tsai H.-C."/>
            <person name="Liao T.-L."/>
            <person name="Liu Y.-M."/>
            <person name="Chen H.-J."/>
            <person name="Shen A.B.-T."/>
            <person name="Li J.-C."/>
            <person name="Su T.-L."/>
            <person name="Shao C.-P."/>
            <person name="Lee C.-T."/>
            <person name="Hor L.-I."/>
            <person name="Tsai S.-F."/>
        </authorList>
    </citation>
    <scope>NUCLEOTIDE SEQUENCE [LARGE SCALE GENOMIC DNA]</scope>
    <source>
        <strain>YJ016</strain>
    </source>
</reference>
<keyword id="KW-0479">Metal-binding</keyword>
<keyword id="KW-0665">Pyrimidine biosynthesis</keyword>
<keyword id="KW-0862">Zinc</keyword>
<comment type="function">
    <text evidence="1">Involved in allosteric regulation of aspartate carbamoyltransferase.</text>
</comment>
<comment type="cofactor">
    <cofactor evidence="1">
        <name>Zn(2+)</name>
        <dbReference type="ChEBI" id="CHEBI:29105"/>
    </cofactor>
    <text evidence="1">Binds 1 zinc ion per subunit.</text>
</comment>
<comment type="subunit">
    <text evidence="1">Contains catalytic and regulatory chains.</text>
</comment>
<comment type="similarity">
    <text evidence="1">Belongs to the PyrI family.</text>
</comment>
<gene>
    <name evidence="1" type="primary">pyrI</name>
    <name type="ordered locus">VV2921</name>
</gene>